<name>MEND_PROM9</name>
<proteinExistence type="inferred from homology"/>
<keyword id="KW-0460">Magnesium</keyword>
<keyword id="KW-0464">Manganese</keyword>
<keyword id="KW-0479">Metal-binding</keyword>
<keyword id="KW-0786">Thiamine pyrophosphate</keyword>
<keyword id="KW-0808">Transferase</keyword>
<comment type="function">
    <text evidence="1">Catalyzes the thiamine diphosphate-dependent decarboxylation of 2-oxoglutarate and the subsequent addition of the resulting succinic semialdehyde-thiamine pyrophosphate anion to isochorismate to yield 2-succinyl-5-enolpyruvyl-6-hydroxy-3-cyclohexene-1-carboxylate (SEPHCHC).</text>
</comment>
<comment type="catalytic activity">
    <reaction evidence="1">
        <text>isochorismate + 2-oxoglutarate + H(+) = 5-enolpyruvoyl-6-hydroxy-2-succinyl-cyclohex-3-ene-1-carboxylate + CO2</text>
        <dbReference type="Rhea" id="RHEA:25593"/>
        <dbReference type="ChEBI" id="CHEBI:15378"/>
        <dbReference type="ChEBI" id="CHEBI:16526"/>
        <dbReference type="ChEBI" id="CHEBI:16810"/>
        <dbReference type="ChEBI" id="CHEBI:29780"/>
        <dbReference type="ChEBI" id="CHEBI:58818"/>
        <dbReference type="EC" id="2.2.1.9"/>
    </reaction>
</comment>
<comment type="cofactor">
    <cofactor evidence="1">
        <name>Mg(2+)</name>
        <dbReference type="ChEBI" id="CHEBI:18420"/>
    </cofactor>
    <cofactor evidence="1">
        <name>Mn(2+)</name>
        <dbReference type="ChEBI" id="CHEBI:29035"/>
    </cofactor>
</comment>
<comment type="cofactor">
    <cofactor evidence="1">
        <name>thiamine diphosphate</name>
        <dbReference type="ChEBI" id="CHEBI:58937"/>
    </cofactor>
    <text evidence="1">Binds 1 thiamine pyrophosphate per subunit.</text>
</comment>
<comment type="pathway">
    <text evidence="1">Quinol/quinone metabolism; 1,4-dihydroxy-2-naphthoate biosynthesis; 1,4-dihydroxy-2-naphthoate from chorismate: step 2/7.</text>
</comment>
<comment type="pathway">
    <text evidence="1">Cofactor biosynthesis; phylloquinone biosynthesis.</text>
</comment>
<comment type="subunit">
    <text evidence="1">Homodimer.</text>
</comment>
<comment type="similarity">
    <text evidence="1">Belongs to the TPP enzyme family. MenD subfamily.</text>
</comment>
<protein>
    <recommendedName>
        <fullName evidence="1">2-succinyl-5-enolpyruvyl-6-hydroxy-3-cyclohexene-1-carboxylate synthase</fullName>
        <shortName evidence="1">SEPHCHC synthase</shortName>
        <ecNumber evidence="1">2.2.1.9</ecNumber>
    </recommendedName>
</protein>
<evidence type="ECO:0000255" key="1">
    <source>
        <dbReference type="HAMAP-Rule" id="MF_01659"/>
    </source>
</evidence>
<organism>
    <name type="scientific">Prochlorococcus marinus (strain MIT 9312)</name>
    <dbReference type="NCBI Taxonomy" id="74546"/>
    <lineage>
        <taxon>Bacteria</taxon>
        <taxon>Bacillati</taxon>
        <taxon>Cyanobacteriota</taxon>
        <taxon>Cyanophyceae</taxon>
        <taxon>Synechococcales</taxon>
        <taxon>Prochlorococcaceae</taxon>
        <taxon>Prochlorococcus</taxon>
    </lineage>
</organism>
<dbReference type="EC" id="2.2.1.9" evidence="1"/>
<dbReference type="EMBL" id="CP000111">
    <property type="protein sequence ID" value="ABB49668.1"/>
    <property type="molecule type" value="Genomic_DNA"/>
</dbReference>
<dbReference type="RefSeq" id="WP_011376163.1">
    <property type="nucleotide sequence ID" value="NC_007577.1"/>
</dbReference>
<dbReference type="SMR" id="Q31BS7"/>
<dbReference type="STRING" id="74546.PMT9312_0607"/>
<dbReference type="KEGG" id="pmi:PMT9312_0607"/>
<dbReference type="eggNOG" id="COG1165">
    <property type="taxonomic scope" value="Bacteria"/>
</dbReference>
<dbReference type="HOGENOM" id="CLU_006051_3_0_3"/>
<dbReference type="OrthoDB" id="9791859at2"/>
<dbReference type="UniPathway" id="UPA00995"/>
<dbReference type="UniPathway" id="UPA01057">
    <property type="reaction ID" value="UER00164"/>
</dbReference>
<dbReference type="Proteomes" id="UP000002715">
    <property type="component" value="Chromosome"/>
</dbReference>
<dbReference type="GO" id="GO:0070204">
    <property type="term" value="F:2-succinyl-5-enolpyruvyl-6-hydroxy-3-cyclohexene-1-carboxylic-acid synthase activity"/>
    <property type="evidence" value="ECO:0007669"/>
    <property type="project" value="UniProtKB-UniRule"/>
</dbReference>
<dbReference type="GO" id="GO:0000287">
    <property type="term" value="F:magnesium ion binding"/>
    <property type="evidence" value="ECO:0007669"/>
    <property type="project" value="UniProtKB-UniRule"/>
</dbReference>
<dbReference type="GO" id="GO:0030145">
    <property type="term" value="F:manganese ion binding"/>
    <property type="evidence" value="ECO:0007669"/>
    <property type="project" value="UniProtKB-UniRule"/>
</dbReference>
<dbReference type="GO" id="GO:0030976">
    <property type="term" value="F:thiamine pyrophosphate binding"/>
    <property type="evidence" value="ECO:0007669"/>
    <property type="project" value="UniProtKB-UniRule"/>
</dbReference>
<dbReference type="GO" id="GO:0009234">
    <property type="term" value="P:menaquinone biosynthetic process"/>
    <property type="evidence" value="ECO:0007669"/>
    <property type="project" value="InterPro"/>
</dbReference>
<dbReference type="GO" id="GO:0042372">
    <property type="term" value="P:phylloquinone biosynthetic process"/>
    <property type="evidence" value="ECO:0007669"/>
    <property type="project" value="UniProtKB-UniRule"/>
</dbReference>
<dbReference type="CDD" id="cd07037">
    <property type="entry name" value="TPP_PYR_MenD"/>
    <property type="match status" value="1"/>
</dbReference>
<dbReference type="CDD" id="cd02009">
    <property type="entry name" value="TPP_SHCHC_synthase"/>
    <property type="match status" value="1"/>
</dbReference>
<dbReference type="Gene3D" id="3.40.50.970">
    <property type="match status" value="2"/>
</dbReference>
<dbReference type="Gene3D" id="3.40.50.1220">
    <property type="entry name" value="TPP-binding domain"/>
    <property type="match status" value="1"/>
</dbReference>
<dbReference type="HAMAP" id="MF_01659">
    <property type="entry name" value="MenD"/>
    <property type="match status" value="1"/>
</dbReference>
<dbReference type="InterPro" id="IPR004433">
    <property type="entry name" value="MenaQ_synth_MenD"/>
</dbReference>
<dbReference type="InterPro" id="IPR029061">
    <property type="entry name" value="THDP-binding"/>
</dbReference>
<dbReference type="InterPro" id="IPR012001">
    <property type="entry name" value="Thiamin_PyroP_enz_TPP-bd_dom"/>
</dbReference>
<dbReference type="InterPro" id="IPR011766">
    <property type="entry name" value="TPP_enzyme_TPP-bd"/>
</dbReference>
<dbReference type="NCBIfam" id="TIGR00173">
    <property type="entry name" value="menD"/>
    <property type="match status" value="1"/>
</dbReference>
<dbReference type="PANTHER" id="PTHR42916">
    <property type="entry name" value="2-SUCCINYL-5-ENOLPYRUVYL-6-HYDROXY-3-CYCLOHEXENE-1-CARBOXYLATE SYNTHASE"/>
    <property type="match status" value="1"/>
</dbReference>
<dbReference type="PANTHER" id="PTHR42916:SF1">
    <property type="entry name" value="PROTEIN PHYLLO, CHLOROPLASTIC"/>
    <property type="match status" value="1"/>
</dbReference>
<dbReference type="Pfam" id="PF02775">
    <property type="entry name" value="TPP_enzyme_C"/>
    <property type="match status" value="1"/>
</dbReference>
<dbReference type="Pfam" id="PF02776">
    <property type="entry name" value="TPP_enzyme_N"/>
    <property type="match status" value="1"/>
</dbReference>
<dbReference type="PIRSF" id="PIRSF004983">
    <property type="entry name" value="MenD"/>
    <property type="match status" value="1"/>
</dbReference>
<dbReference type="SUPFAM" id="SSF52518">
    <property type="entry name" value="Thiamin diphosphate-binding fold (THDP-binding)"/>
    <property type="match status" value="2"/>
</dbReference>
<reference key="1">
    <citation type="journal article" date="2006" name="Science">
        <title>Genomic islands and the ecology and evolution of Prochlorococcus.</title>
        <authorList>
            <person name="Coleman M.L."/>
            <person name="Sullivan M.B."/>
            <person name="Martiny A.C."/>
            <person name="Steglich C."/>
            <person name="Barry K."/>
            <person name="Delong E.F."/>
            <person name="Chisholm S.W."/>
        </authorList>
    </citation>
    <scope>NUCLEOTIDE SEQUENCE [LARGE SCALE GENOMIC DNA]</scope>
    <source>
        <strain>MIT 9312</strain>
    </source>
</reference>
<accession>Q31BS7</accession>
<sequence>MTSSIECKNFLRSLQLLNLLIKIGVQNLIVCPGSRSAPLAIAAGELNKLGLVNIFNSIDERSAGFHSLGISAASGNLSLVITTSGTAVSNLLPAAVEADRSCKGIIFLTADRPLRLKDCGANQTVNQEDFLSSVCRRVLSTNLNGLHETQENEILNLVQITEKQISTFPGPIHLNIPIDKPLGISFLNKKNVLEVFERIYLKKKYVFQEVEIKSNKNKFLEILENLNLDESGIILVGPYQGSINELSSFNKSLEKLQAITGWPVFADPVSCVYSDLRGLVVNWELVLRKNKNLINCHQLLRLGPMSSSIDLEDFLTTFEGIQILIKEKNYRKLDPIKKSFEYDFGLLNFITLLLAELSINKINTKSLTPLAIDLMEEGEQIKKILKEKITNDNQITEYKLANLVPKLWPAENPIMLSASSPIRDWLTFSENGTLTRNCFSFRGASGIDGTLSLALGISRIKNPLLLVTGDLAFVHDLNGWLIENSIDLNLTILLINNNGGNIFNRLYKDNLKEDELKKLFLMPKEINWKKLAEGYQVNFKSVTNFKKLREAFEWSISIRESVIIKVDIDPENEISDKNALLEKIIGS</sequence>
<feature type="chain" id="PRO_0000341803" description="2-succinyl-5-enolpyruvyl-6-hydroxy-3-cyclohexene-1-carboxylate synthase">
    <location>
        <begin position="1"/>
        <end position="587"/>
    </location>
</feature>
<gene>
    <name evidence="1" type="primary">menD</name>
    <name type="ordered locus">PMT9312_0607</name>
</gene>